<reference key="1">
    <citation type="submission" date="1994-07" db="EMBL/GenBank/DDBJ databases">
        <authorList>
            <person name="Nilles M.L."/>
            <person name="Bertrand K.P."/>
        </authorList>
    </citation>
    <scope>NUCLEOTIDE SEQUENCE [GENOMIC DNA]</scope>
    <source>
        <strain>K12</strain>
    </source>
</reference>
<reference key="2">
    <citation type="submission" date="1995-08" db="EMBL/GenBank/DDBJ databases">
        <authorList>
            <person name="Ma D."/>
            <person name="Cook D.N."/>
            <person name="Alberti M."/>
            <person name="Nikaido H."/>
            <person name="Hearst J.E."/>
        </authorList>
    </citation>
    <scope>NUCLEOTIDE SEQUENCE [GENOMIC DNA]</scope>
</reference>
<reference key="3">
    <citation type="journal article" date="1997" name="DNA Res.">
        <title>Construction of a contiguous 874-kb sequence of the Escherichia coli-K12 genome corresponding to 50.0-68.8 min on the linkage map and analysis of its sequence features.</title>
        <authorList>
            <person name="Yamamoto Y."/>
            <person name="Aiba H."/>
            <person name="Baba T."/>
            <person name="Hayashi K."/>
            <person name="Inada T."/>
            <person name="Isono K."/>
            <person name="Itoh T."/>
            <person name="Kimura S."/>
            <person name="Kitagawa M."/>
            <person name="Makino K."/>
            <person name="Miki T."/>
            <person name="Mitsuhashi N."/>
            <person name="Mizobuchi K."/>
            <person name="Mori H."/>
            <person name="Nakade S."/>
            <person name="Nakamura Y."/>
            <person name="Nashimoto H."/>
            <person name="Oshima T."/>
            <person name="Oyama S."/>
            <person name="Saito N."/>
            <person name="Sampei G."/>
            <person name="Satoh Y."/>
            <person name="Sivasundaram S."/>
            <person name="Tagami H."/>
            <person name="Takahashi H."/>
            <person name="Takeda J."/>
            <person name="Takemoto K."/>
            <person name="Uehara K."/>
            <person name="Wada C."/>
            <person name="Yamagata S."/>
            <person name="Horiuchi T."/>
        </authorList>
    </citation>
    <scope>NUCLEOTIDE SEQUENCE [LARGE SCALE GENOMIC DNA]</scope>
    <source>
        <strain>K12 / W3110 / ATCC 27325 / DSM 5911</strain>
    </source>
</reference>
<reference key="4">
    <citation type="journal article" date="1997" name="Science">
        <title>The complete genome sequence of Escherichia coli K-12.</title>
        <authorList>
            <person name="Blattner F.R."/>
            <person name="Plunkett G. III"/>
            <person name="Bloch C.A."/>
            <person name="Perna N.T."/>
            <person name="Burland V."/>
            <person name="Riley M."/>
            <person name="Collado-Vides J."/>
            <person name="Glasner J.D."/>
            <person name="Rode C.K."/>
            <person name="Mayhew G.F."/>
            <person name="Gregor J."/>
            <person name="Davis N.W."/>
            <person name="Kirkpatrick H.A."/>
            <person name="Goeden M.A."/>
            <person name="Rose D.J."/>
            <person name="Mau B."/>
            <person name="Shao Y."/>
        </authorList>
    </citation>
    <scope>NUCLEOTIDE SEQUENCE [LARGE SCALE GENOMIC DNA]</scope>
    <source>
        <strain>K12 / MG1655 / ATCC 47076</strain>
    </source>
</reference>
<reference key="5">
    <citation type="journal article" date="2006" name="Mol. Syst. Biol.">
        <title>Highly accurate genome sequences of Escherichia coli K-12 strains MG1655 and W3110.</title>
        <authorList>
            <person name="Hayashi K."/>
            <person name="Morooka N."/>
            <person name="Yamamoto Y."/>
            <person name="Fujita K."/>
            <person name="Isono K."/>
            <person name="Choi S."/>
            <person name="Ohtsubo E."/>
            <person name="Baba T."/>
            <person name="Wanner B.L."/>
            <person name="Mori H."/>
            <person name="Horiuchi T."/>
        </authorList>
    </citation>
    <scope>NUCLEOTIDE SEQUENCE [LARGE SCALE GENOMIC DNA]</scope>
    <source>
        <strain>K12 / W3110 / ATCC 27325 / DSM 5911</strain>
    </source>
</reference>
<reference key="6">
    <citation type="journal article" date="1992" name="J. Bacteriol.">
        <title>Cloning, characterization, and expression of the dapE gene of Escherichia coli.</title>
        <authorList>
            <person name="Bouvier J."/>
            <person name="Richaud C."/>
            <person name="Higgins W."/>
            <person name="Bogler O."/>
            <person name="Stragier S."/>
        </authorList>
    </citation>
    <scope>NUCLEOTIDE SEQUENCE [GENOMIC DNA] OF 998-1037</scope>
    <source>
        <strain>K12</strain>
    </source>
</reference>
<reference key="7">
    <citation type="journal article" date="2000" name="J. Bacteriol.">
        <title>AcrD of Escherichia coli is an aminoglycoside efflux pump.</title>
        <authorList>
            <person name="Rosenberg E.Y."/>
            <person name="Ma D."/>
            <person name="Nikaido H."/>
        </authorList>
    </citation>
    <scope>FUNCTION</scope>
</reference>
<reference key="8">
    <citation type="journal article" date="2005" name="Science">
        <title>Global topology analysis of the Escherichia coli inner membrane proteome.</title>
        <authorList>
            <person name="Daley D.O."/>
            <person name="Rapp M."/>
            <person name="Granseth E."/>
            <person name="Melen K."/>
            <person name="Drew D."/>
            <person name="von Heijne G."/>
        </authorList>
    </citation>
    <scope>SUBCELLULAR LOCATION</scope>
    <source>
        <strain>K12 / MG1655 / ATCC 47076</strain>
    </source>
</reference>
<feature type="chain" id="PRO_0000161812" description="Probable aminoglycoside efflux pump">
    <location>
        <begin position="1"/>
        <end position="1037"/>
    </location>
</feature>
<feature type="topological domain" description="Cytoplasmic" evidence="1">
    <location>
        <begin position="1"/>
        <end position="9"/>
    </location>
</feature>
<feature type="transmembrane region" description="Helical; Name=1" evidence="1">
    <location>
        <begin position="10"/>
        <end position="28"/>
    </location>
</feature>
<feature type="topological domain" description="Periplasmic" evidence="1">
    <location>
        <begin position="29"/>
        <end position="339"/>
    </location>
</feature>
<feature type="transmembrane region" description="Helical; Name=2" evidence="1">
    <location>
        <begin position="340"/>
        <end position="359"/>
    </location>
</feature>
<feature type="topological domain" description="Cytoplasmic" evidence="1">
    <location>
        <begin position="360"/>
        <end position="365"/>
    </location>
</feature>
<feature type="transmembrane region" description="Helical; Name=3" evidence="1">
    <location>
        <begin position="366"/>
        <end position="385"/>
    </location>
</feature>
<feature type="topological domain" description="Periplasmic" evidence="1">
    <location>
        <begin position="386"/>
        <end position="391"/>
    </location>
</feature>
<feature type="transmembrane region" description="Helical; Name=4" evidence="1">
    <location>
        <begin position="392"/>
        <end position="413"/>
    </location>
</feature>
<feature type="topological domain" description="Cytoplasmic" evidence="1">
    <location>
        <begin position="414"/>
        <end position="441"/>
    </location>
</feature>
<feature type="transmembrane region" description="Helical; Name=5" evidence="1">
    <location>
        <begin position="442"/>
        <end position="460"/>
    </location>
</feature>
<feature type="topological domain" description="Periplasmic" evidence="1">
    <location>
        <begin position="461"/>
        <end position="473"/>
    </location>
</feature>
<feature type="transmembrane region" description="Helical; Name=6" evidence="1">
    <location>
        <begin position="474"/>
        <end position="496"/>
    </location>
</feature>
<feature type="topological domain" description="Cytoplasmic" evidence="1">
    <location>
        <begin position="497"/>
        <end position="537"/>
    </location>
</feature>
<feature type="transmembrane region" description="Helical; Name=7" evidence="1">
    <location>
        <begin position="538"/>
        <end position="556"/>
    </location>
</feature>
<feature type="topological domain" description="Periplasmic" evidence="1">
    <location>
        <begin position="557"/>
        <end position="870"/>
    </location>
</feature>
<feature type="transmembrane region" description="Helical; Name=8" evidence="1">
    <location>
        <begin position="871"/>
        <end position="890"/>
    </location>
</feature>
<feature type="topological domain" description="Cytoplasmic" evidence="1">
    <location>
        <begin position="891"/>
        <end position="896"/>
    </location>
</feature>
<feature type="transmembrane region" description="Helical; Name=9" evidence="1">
    <location>
        <begin position="897"/>
        <end position="916"/>
    </location>
</feature>
<feature type="topological domain" description="Periplasmic" evidence="1">
    <location>
        <begin position="917"/>
        <end position="922"/>
    </location>
</feature>
<feature type="transmembrane region" description="Helical; Name=10" evidence="1">
    <location>
        <begin position="923"/>
        <end position="944"/>
    </location>
</feature>
<feature type="topological domain" description="Cytoplasmic" evidence="1">
    <location>
        <begin position="945"/>
        <end position="971"/>
    </location>
</feature>
<feature type="transmembrane region" description="Helical; Name=11" evidence="1">
    <location>
        <begin position="972"/>
        <end position="990"/>
    </location>
</feature>
<feature type="topological domain" description="Periplasmic" evidence="1">
    <location>
        <begin position="991"/>
        <end position="1003"/>
    </location>
</feature>
<feature type="transmembrane region" description="Helical; Name=12" evidence="1">
    <location>
        <begin position="1004"/>
        <end position="1026"/>
    </location>
</feature>
<feature type="topological domain" description="Cytoplasmic" evidence="1">
    <location>
        <begin position="1027"/>
        <end position="1037"/>
    </location>
</feature>
<feature type="sequence conflict" description="In Ref. 1; AAA20584." evidence="4" ref="1">
    <original>A</original>
    <variation>G</variation>
    <location>
        <position position="303"/>
    </location>
</feature>
<feature type="sequence conflict" description="In Ref. 1; AAA20584." evidence="4" ref="1">
    <original>V</original>
    <variation>E</variation>
    <location>
        <position position="372"/>
    </location>
</feature>
<feature type="sequence conflict" description="In Ref. 2; AAA74741." evidence="4" ref="2">
    <original>A</original>
    <variation>D</variation>
    <location>
        <position position="385"/>
    </location>
</feature>
<feature type="sequence conflict" description="In Ref. 1; AAA20584." evidence="4" ref="1">
    <original>G</original>
    <variation>P</variation>
    <location>
        <position position="461"/>
    </location>
</feature>
<feature type="sequence conflict" description="In Ref. 1; AAA20584." evidence="4" ref="1">
    <original>S</original>
    <variation>PD</variation>
    <location>
        <position position="665"/>
    </location>
</feature>
<feature type="sequence conflict" description="In Ref. 1; AAA20584." evidence="4" ref="1">
    <original>R</original>
    <variation>A</variation>
    <location>
        <position position="763"/>
    </location>
</feature>
<feature type="sequence conflict" description="In Ref. 1; AAA20584." evidence="4" ref="1">
    <original>A</original>
    <variation>G</variation>
    <location>
        <position position="775"/>
    </location>
</feature>
<feature type="sequence conflict" description="In Ref. 1; AAA20584." evidence="4" ref="1">
    <original>R</original>
    <variation>P</variation>
    <location>
        <position position="778"/>
    </location>
</feature>
<feature type="helix" evidence="5">
    <location>
        <begin position="2"/>
        <end position="6"/>
    </location>
</feature>
<feature type="helix" evidence="5">
    <location>
        <begin position="9"/>
        <end position="28"/>
    </location>
</feature>
<feature type="strand" evidence="5">
    <location>
        <begin position="42"/>
        <end position="48"/>
    </location>
</feature>
<feature type="helix" evidence="5">
    <location>
        <begin position="54"/>
        <end position="60"/>
    </location>
</feature>
<feature type="helix" evidence="5">
    <location>
        <begin position="62"/>
        <end position="69"/>
    </location>
</feature>
<feature type="strand" evidence="5">
    <location>
        <begin position="75"/>
        <end position="83"/>
    </location>
</feature>
<feature type="strand" evidence="5">
    <location>
        <begin position="86"/>
        <end position="94"/>
    </location>
</feature>
<feature type="helix" evidence="5">
    <location>
        <begin position="100"/>
        <end position="117"/>
    </location>
</feature>
<feature type="helix" evidence="5">
    <location>
        <begin position="120"/>
        <end position="125"/>
    </location>
</feature>
<feature type="strand" evidence="5">
    <location>
        <begin position="127"/>
        <end position="131"/>
    </location>
</feature>
<feature type="strand" evidence="5">
    <location>
        <begin position="136"/>
        <end position="147"/>
    </location>
</feature>
<feature type="helix" evidence="5">
    <location>
        <begin position="151"/>
        <end position="161"/>
    </location>
</feature>
<feature type="helix" evidence="5">
    <location>
        <begin position="163"/>
        <end position="167"/>
    </location>
</feature>
<feature type="strand" evidence="5">
    <location>
        <begin position="172"/>
        <end position="179"/>
    </location>
</feature>
<feature type="strand" evidence="5">
    <location>
        <begin position="184"/>
        <end position="188"/>
    </location>
</feature>
<feature type="helix" evidence="5">
    <location>
        <begin position="190"/>
        <end position="195"/>
    </location>
</feature>
<feature type="helix" evidence="5">
    <location>
        <begin position="200"/>
        <end position="210"/>
    </location>
</feature>
<feature type="strand" evidence="5">
    <location>
        <begin position="215"/>
        <end position="219"/>
    </location>
</feature>
<feature type="strand" evidence="5">
    <location>
        <begin position="232"/>
        <end position="236"/>
    </location>
</feature>
<feature type="helix" evidence="5">
    <location>
        <begin position="243"/>
        <end position="247"/>
    </location>
</feature>
<feature type="strand" evidence="6">
    <location>
        <begin position="250"/>
        <end position="253"/>
    </location>
</feature>
<feature type="strand" evidence="6">
    <location>
        <begin position="259"/>
        <end position="261"/>
    </location>
</feature>
<feature type="helix" evidence="5">
    <location>
        <begin position="262"/>
        <end position="265"/>
    </location>
</feature>
<feature type="strand" evidence="5">
    <location>
        <begin position="266"/>
        <end position="269"/>
    </location>
</feature>
<feature type="strand" evidence="5">
    <location>
        <begin position="278"/>
        <end position="281"/>
    </location>
</feature>
<feature type="strand" evidence="5">
    <location>
        <begin position="284"/>
        <end position="293"/>
    </location>
</feature>
<feature type="helix" evidence="5">
    <location>
        <begin position="299"/>
        <end position="315"/>
    </location>
</feature>
<feature type="strand" evidence="5">
    <location>
        <begin position="321"/>
        <end position="329"/>
    </location>
</feature>
<feature type="helix" evidence="5">
    <location>
        <begin position="330"/>
        <end position="358"/>
    </location>
</feature>
<feature type="helix" evidence="5">
    <location>
        <begin position="362"/>
        <end position="385"/>
    </location>
</feature>
<feature type="helix" evidence="5">
    <location>
        <begin position="392"/>
        <end position="423"/>
    </location>
</feature>
<feature type="helix" evidence="5">
    <location>
        <begin position="427"/>
        <end position="451"/>
    </location>
</feature>
<feature type="helix" evidence="5">
    <location>
        <begin position="454"/>
        <end position="458"/>
    </location>
</feature>
<feature type="helix" evidence="5">
    <location>
        <begin position="461"/>
        <end position="485"/>
    </location>
</feature>
<feature type="helix" evidence="5">
    <location>
        <begin position="488"/>
        <end position="495"/>
    </location>
</feature>
<feature type="helix" evidence="5">
    <location>
        <begin position="500"/>
        <end position="503"/>
    </location>
</feature>
<feature type="strand" evidence="6">
    <location>
        <begin position="505"/>
        <end position="507"/>
    </location>
</feature>
<feature type="helix" evidence="5">
    <location>
        <begin position="511"/>
        <end position="535"/>
    </location>
</feature>
<feature type="helix" evidence="5">
    <location>
        <begin position="537"/>
        <end position="557"/>
    </location>
</feature>
<feature type="strand" evidence="5">
    <location>
        <begin position="569"/>
        <end position="576"/>
    </location>
</feature>
<feature type="helix" evidence="5">
    <location>
        <begin position="583"/>
        <end position="599"/>
    </location>
</feature>
<feature type="turn" evidence="5">
    <location>
        <begin position="600"/>
        <end position="604"/>
    </location>
</feature>
<feature type="strand" evidence="5">
    <location>
        <begin position="605"/>
        <end position="614"/>
    </location>
</feature>
<feature type="strand" evidence="5">
    <location>
        <begin position="621"/>
        <end position="630"/>
    </location>
</feature>
<feature type="turn" evidence="5">
    <location>
        <begin position="633"/>
        <end position="635"/>
    </location>
</feature>
<feature type="strand" evidence="5">
    <location>
        <begin position="638"/>
        <end position="642"/>
    </location>
</feature>
<feature type="helix" evidence="5">
    <location>
        <begin position="643"/>
        <end position="656"/>
    </location>
</feature>
<feature type="strand" evidence="5">
    <location>
        <begin position="659"/>
        <end position="665"/>
    </location>
</feature>
<feature type="turn" evidence="5">
    <location>
        <begin position="671"/>
        <end position="673"/>
    </location>
</feature>
<feature type="strand" evidence="5">
    <location>
        <begin position="675"/>
        <end position="687"/>
    </location>
</feature>
<feature type="helix" evidence="5">
    <location>
        <begin position="691"/>
        <end position="707"/>
    </location>
</feature>
<feature type="strand" evidence="5">
    <location>
        <begin position="711"/>
        <end position="718"/>
    </location>
</feature>
<feature type="strand" evidence="5">
    <location>
        <begin position="722"/>
        <end position="725"/>
    </location>
</feature>
<feature type="helix" evidence="5">
    <location>
        <begin position="731"/>
        <end position="736"/>
    </location>
</feature>
<feature type="helix" evidence="5">
    <location>
        <begin position="741"/>
        <end position="752"/>
    </location>
</feature>
<feature type="strand" evidence="5">
    <location>
        <begin position="753"/>
        <end position="762"/>
    </location>
</feature>
<feature type="strand" evidence="5">
    <location>
        <begin position="765"/>
        <end position="773"/>
    </location>
</feature>
<feature type="helix" evidence="6">
    <location>
        <begin position="775"/>
        <end position="777"/>
    </location>
</feature>
<feature type="strand" evidence="6">
    <location>
        <begin position="778"/>
        <end position="780"/>
    </location>
</feature>
<feature type="helix" evidence="5">
    <location>
        <begin position="783"/>
        <end position="786"/>
    </location>
</feature>
<feature type="strand" evidence="5">
    <location>
        <begin position="788"/>
        <end position="790"/>
    </location>
</feature>
<feature type="strand" evidence="5">
    <location>
        <begin position="796"/>
        <end position="798"/>
    </location>
</feature>
<feature type="helix" evidence="5">
    <location>
        <begin position="799"/>
        <end position="802"/>
    </location>
</feature>
<feature type="strand" evidence="5">
    <location>
        <begin position="807"/>
        <end position="810"/>
    </location>
</feature>
<feature type="strand" evidence="5">
    <location>
        <begin position="812"/>
        <end position="817"/>
    </location>
</feature>
<feature type="strand" evidence="5">
    <location>
        <begin position="820"/>
        <end position="829"/>
    </location>
</feature>
<feature type="helix" evidence="5">
    <location>
        <begin position="835"/>
        <end position="848"/>
    </location>
</feature>
<feature type="strand" evidence="5">
    <location>
        <begin position="853"/>
        <end position="857"/>
    </location>
</feature>
<feature type="helix" evidence="5">
    <location>
        <begin position="860"/>
        <end position="890"/>
    </location>
</feature>
<feature type="helix" evidence="5">
    <location>
        <begin position="894"/>
        <end position="900"/>
    </location>
</feature>
<feature type="helix" evidence="5">
    <location>
        <begin position="903"/>
        <end position="917"/>
    </location>
</feature>
<feature type="helix" evidence="5">
    <location>
        <begin position="923"/>
        <end position="953"/>
    </location>
</feature>
<feature type="helix" evidence="5">
    <location>
        <begin position="957"/>
        <end position="982"/>
    </location>
</feature>
<feature type="helix" evidence="5">
    <location>
        <begin position="984"/>
        <end position="987"/>
    </location>
</feature>
<feature type="helix" evidence="5">
    <location>
        <begin position="994"/>
        <end position="1029"/>
    </location>
</feature>
<gene>
    <name type="primary">acrD</name>
    <name type="synonym">yffA</name>
    <name type="ordered locus">b2470</name>
    <name type="ordered locus">JW2454</name>
</gene>
<accession>P24177</accession>
<accession>P76971</accession>
<accession>P77178</accession>
<accession>Q46715</accession>
<sequence>MANFFIDRPIFAWVLAILLCLTGTLAIFSLPVEQYPDLAPPNVRVTANYPGASAQTLENTVTQVIEQNMTGLDNLMYMSSQSSGTGQASVTLSFKAGTDPDEAVQQVQNQLQSAMRKLPQAVQNQGVTVRKTGDTNILTIAFVSTDGSMDKQDIADYVASNIQDPLSRVNGVGDIDAYGSQYSMRIWLDPAKLNSFQMTAKDVTDAIESQNAQIAVGQLGGTPSVDKQALNATINAQSLLQTPEQFRDITLRVNQDGSEVRLGDVATVEMGAEKYDYLSRFNGKPASGLGVKLASGANEMATAELVLNRLDELAQYFPHGLEYKVAYETTSFVKASIEDVVKTLLEAIALVFLVMYLFLQNFRATLIPTIAVPVVLMGTFSVLYAFGYSVNTLTMFAMVLAIGLLVDDAIVVVENVERIMSEEGLTPREATRKSMGQIQGALVGIAMVLSAVFVPMAFFGGTTGAIYRQFSITIVAAMVLSVLVAMILTPALCATLLKPLKKGEHHGQKGFFAWFNQMFNRNAERYEKGVAKILHRSLRWIVIYVLLLGGMVFLFLRLPTSFLPLEDRGMFTTSVQLPSGSTQQQTLKVVEQIEKYYFTHEKDNIMSVFATVGSGPGGNGQNVARMFIRLKDWSERDSKTGTSFAIIERATKAFNQIKEARVIASSPPAISGLGSSAGFDMELQDHAGAGHDALMAARNQLLALAAENPELTRVRHNGLDDSPQLQIDIDQRKAQALGVAIDDINDTLQTAWGSSYVNDFMDRGRVKKVYVQAAAPYRMLPDDINLWYVRNKDGGMVPFSAFATSRWETGSPRLERYNGYSAVEIVGEAAPGVSTGTAMDIMESLVKQLPNGFGLEWTAMSYQERLSGAQAPALYAISLLVVFLCLAALYESWSVPFSVMLVVPLGVIGALLATWMRGLENDVYFQVGLLTVIGLSAKNAILIVEFANEMNQKGHDLFEATLHACRQRLRPILMTSLAFIFGVLPMATSTGAGSGGQHAVGTGVMGGMISATILAIYFVPLFFVLVRRRFPLKPRPE</sequence>
<organism>
    <name type="scientific">Escherichia coli (strain K12)</name>
    <dbReference type="NCBI Taxonomy" id="83333"/>
    <lineage>
        <taxon>Bacteria</taxon>
        <taxon>Pseudomonadati</taxon>
        <taxon>Pseudomonadota</taxon>
        <taxon>Gammaproteobacteria</taxon>
        <taxon>Enterobacterales</taxon>
        <taxon>Enterobacteriaceae</taxon>
        <taxon>Escherichia</taxon>
    </lineage>
</organism>
<proteinExistence type="evidence at protein level"/>
<name>ACRD_ECOLI</name>
<comment type="function">
    <text evidence="2">Participates in the efflux of aminoglycosides. Confers resistance to a variety of these substances.</text>
</comment>
<comment type="subcellular location">
    <subcellularLocation>
        <location evidence="3">Cell inner membrane</location>
        <topology evidence="3">Multi-pass membrane protein</topology>
    </subcellularLocation>
</comment>
<comment type="similarity">
    <text evidence="4">Belongs to the resistance-nodulation-cell division (RND) (TC 2.A.6) family.</text>
</comment>
<dbReference type="EMBL" id="U12598">
    <property type="protein sequence ID" value="AAA20584.1"/>
    <property type="molecule type" value="Genomic_DNA"/>
</dbReference>
<dbReference type="EMBL" id="U10436">
    <property type="protein sequence ID" value="AAA74741.1"/>
    <property type="molecule type" value="Genomic_DNA"/>
</dbReference>
<dbReference type="EMBL" id="U00096">
    <property type="protein sequence ID" value="AAC75523.1"/>
    <property type="molecule type" value="Genomic_DNA"/>
</dbReference>
<dbReference type="EMBL" id="AP009048">
    <property type="protein sequence ID" value="BAA16344.1"/>
    <property type="molecule type" value="Genomic_DNA"/>
</dbReference>
<dbReference type="EMBL" id="X57403">
    <property type="protein sequence ID" value="CAA40663.1"/>
    <property type="molecule type" value="Genomic_DNA"/>
</dbReference>
<dbReference type="PIR" id="E65022">
    <property type="entry name" value="E65022"/>
</dbReference>
<dbReference type="RefSeq" id="NP_416965.1">
    <property type="nucleotide sequence ID" value="NC_000913.3"/>
</dbReference>
<dbReference type="RefSeq" id="WP_001273151.1">
    <property type="nucleotide sequence ID" value="NZ_LN832404.1"/>
</dbReference>
<dbReference type="PDB" id="8F3E">
    <property type="method" value="EM"/>
    <property type="resolution" value="3.09 A"/>
    <property type="chains" value="A/B/C=1-1037"/>
</dbReference>
<dbReference type="PDB" id="8F4N">
    <property type="method" value="EM"/>
    <property type="resolution" value="2.95 A"/>
    <property type="chains" value="A/B=1-1037"/>
</dbReference>
<dbReference type="PDB" id="8F4R">
    <property type="method" value="EM"/>
    <property type="resolution" value="3.06 A"/>
    <property type="chains" value="A/B/C=1-1037"/>
</dbReference>
<dbReference type="PDB" id="8F56">
    <property type="method" value="EM"/>
    <property type="resolution" value="2.98 A"/>
    <property type="chains" value="A/B=1-1037"/>
</dbReference>
<dbReference type="PDBsum" id="8F3E"/>
<dbReference type="PDBsum" id="8F4N"/>
<dbReference type="PDBsum" id="8F4R"/>
<dbReference type="PDBsum" id="8F56"/>
<dbReference type="SMR" id="P24177"/>
<dbReference type="BioGRID" id="4260927">
    <property type="interactions" value="490"/>
</dbReference>
<dbReference type="ComplexPortal" id="CPX-4264">
    <property type="entry name" value="AcrAD-TolC multidrug efflux transport complex"/>
</dbReference>
<dbReference type="DIP" id="DIP-9050N"/>
<dbReference type="FunCoup" id="P24177">
    <property type="interactions" value="504"/>
</dbReference>
<dbReference type="IntAct" id="P24177">
    <property type="interactions" value="4"/>
</dbReference>
<dbReference type="STRING" id="511145.b2470"/>
<dbReference type="CARD" id="ARO:3000491">
    <property type="molecule name" value="acrD"/>
    <property type="mechanism identifier" value="ARO:0010000"/>
    <property type="mechanism name" value="antibiotic efflux"/>
</dbReference>
<dbReference type="TCDB" id="2.A.6.2.7">
    <property type="family name" value="the resistance-nodulation-cell division (rnd) superfamily"/>
</dbReference>
<dbReference type="PaxDb" id="511145-b2470"/>
<dbReference type="EnsemblBacteria" id="AAC75523">
    <property type="protein sequence ID" value="AAC75523"/>
    <property type="gene ID" value="b2470"/>
</dbReference>
<dbReference type="GeneID" id="945464"/>
<dbReference type="KEGG" id="ecj:JW2454"/>
<dbReference type="KEGG" id="eco:b2470"/>
<dbReference type="KEGG" id="ecoc:C3026_13700"/>
<dbReference type="PATRIC" id="fig|1411691.4.peg.4270"/>
<dbReference type="EchoBASE" id="EB0014"/>
<dbReference type="eggNOG" id="COG0841">
    <property type="taxonomic scope" value="Bacteria"/>
</dbReference>
<dbReference type="HOGENOM" id="CLU_002755_0_2_6"/>
<dbReference type="InParanoid" id="P24177"/>
<dbReference type="OMA" id="WDIPYDI"/>
<dbReference type="OrthoDB" id="9757904at2"/>
<dbReference type="PhylomeDB" id="P24177"/>
<dbReference type="BioCyc" id="EcoCyc:ACRD-MONOMER"/>
<dbReference type="BioCyc" id="MetaCyc:ACRD-MONOMER"/>
<dbReference type="PRO" id="PR:P24177"/>
<dbReference type="Proteomes" id="UP000000625">
    <property type="component" value="Chromosome"/>
</dbReference>
<dbReference type="GO" id="GO:1990281">
    <property type="term" value="C:efflux pump complex"/>
    <property type="evidence" value="ECO:0000304"/>
    <property type="project" value="EcoCyc"/>
</dbReference>
<dbReference type="GO" id="GO:0016020">
    <property type="term" value="C:membrane"/>
    <property type="evidence" value="ECO:0000314"/>
    <property type="project" value="EcoCyc"/>
</dbReference>
<dbReference type="GO" id="GO:0098567">
    <property type="term" value="C:periplasmic side of plasma membrane"/>
    <property type="evidence" value="ECO:0000303"/>
    <property type="project" value="ComplexPortal"/>
</dbReference>
<dbReference type="GO" id="GO:0005886">
    <property type="term" value="C:plasma membrane"/>
    <property type="evidence" value="ECO:0000314"/>
    <property type="project" value="EcoCyc"/>
</dbReference>
<dbReference type="GO" id="GO:0015125">
    <property type="term" value="F:bile acid transmembrane transporter activity"/>
    <property type="evidence" value="ECO:0000315"/>
    <property type="project" value="EcoCyc"/>
</dbReference>
<dbReference type="GO" id="GO:0015562">
    <property type="term" value="F:efflux transmembrane transporter activity"/>
    <property type="evidence" value="ECO:0007669"/>
    <property type="project" value="InterPro"/>
</dbReference>
<dbReference type="GO" id="GO:0042910">
    <property type="term" value="F:xenobiotic transmembrane transporter activity"/>
    <property type="evidence" value="ECO:0000318"/>
    <property type="project" value="GO_Central"/>
</dbReference>
<dbReference type="GO" id="GO:0015721">
    <property type="term" value="P:bile acid and bile salt transport"/>
    <property type="evidence" value="ECO:0000315"/>
    <property type="project" value="EcoCyc"/>
</dbReference>
<dbReference type="GO" id="GO:0046677">
    <property type="term" value="P:response to antibiotic"/>
    <property type="evidence" value="ECO:0000315"/>
    <property type="project" value="EcoCyc"/>
</dbReference>
<dbReference type="GO" id="GO:0009636">
    <property type="term" value="P:response to toxic substance"/>
    <property type="evidence" value="ECO:0000315"/>
    <property type="project" value="EcoCyc"/>
</dbReference>
<dbReference type="GO" id="GO:0140330">
    <property type="term" value="P:xenobiotic detoxification by transmembrane export across the cell outer membrane"/>
    <property type="evidence" value="ECO:0000303"/>
    <property type="project" value="ComplexPortal"/>
</dbReference>
<dbReference type="GO" id="GO:0042908">
    <property type="term" value="P:xenobiotic transport"/>
    <property type="evidence" value="ECO:0000314"/>
    <property type="project" value="EcoCyc"/>
</dbReference>
<dbReference type="FunFam" id="1.20.1640.10:FF:000001">
    <property type="entry name" value="Efflux pump membrane transporter"/>
    <property type="match status" value="1"/>
</dbReference>
<dbReference type="FunFam" id="1.20.1640.10:FF:000002">
    <property type="entry name" value="Efflux pump membrane transporter"/>
    <property type="match status" value="1"/>
</dbReference>
<dbReference type="FunFam" id="3.30.2090.10:FF:000001">
    <property type="entry name" value="Efflux pump membrane transporter"/>
    <property type="match status" value="1"/>
</dbReference>
<dbReference type="FunFam" id="3.30.2090.10:FF:000002">
    <property type="entry name" value="Efflux pump membrane transporter"/>
    <property type="match status" value="1"/>
</dbReference>
<dbReference type="FunFam" id="3.30.70.1430:FF:000001">
    <property type="entry name" value="Efflux pump membrane transporter"/>
    <property type="match status" value="1"/>
</dbReference>
<dbReference type="FunFam" id="3.30.70.1430:FF:000002">
    <property type="entry name" value="Efflux pump membrane transporter"/>
    <property type="match status" value="1"/>
</dbReference>
<dbReference type="Gene3D" id="3.30.70.1430">
    <property type="entry name" value="Multidrug efflux transporter AcrB pore domain"/>
    <property type="match status" value="2"/>
</dbReference>
<dbReference type="Gene3D" id="3.30.70.1440">
    <property type="entry name" value="Multidrug efflux transporter AcrB pore domain"/>
    <property type="match status" value="1"/>
</dbReference>
<dbReference type="Gene3D" id="3.30.70.1320">
    <property type="entry name" value="Multidrug efflux transporter AcrB pore domain like"/>
    <property type="match status" value="1"/>
</dbReference>
<dbReference type="Gene3D" id="3.30.2090.10">
    <property type="entry name" value="Multidrug efflux transporter AcrB TolC docking domain, DN and DC subdomains"/>
    <property type="match status" value="2"/>
</dbReference>
<dbReference type="Gene3D" id="1.20.1640.10">
    <property type="entry name" value="Multidrug efflux transporter AcrB transmembrane domain"/>
    <property type="match status" value="2"/>
</dbReference>
<dbReference type="InterPro" id="IPR027463">
    <property type="entry name" value="AcrB_DN_DC_subdom"/>
</dbReference>
<dbReference type="InterPro" id="IPR001036">
    <property type="entry name" value="Acrflvin-R"/>
</dbReference>
<dbReference type="InterPro" id="IPR004764">
    <property type="entry name" value="MdtF-like"/>
</dbReference>
<dbReference type="NCBIfam" id="TIGR00915">
    <property type="entry name" value="2A0602"/>
    <property type="match status" value="1"/>
</dbReference>
<dbReference type="NCBIfam" id="NF007842">
    <property type="entry name" value="PRK10555.1"/>
    <property type="match status" value="1"/>
</dbReference>
<dbReference type="NCBIfam" id="NF000282">
    <property type="entry name" value="RND_permease_1"/>
    <property type="match status" value="1"/>
</dbReference>
<dbReference type="PANTHER" id="PTHR32063">
    <property type="match status" value="1"/>
</dbReference>
<dbReference type="PANTHER" id="PTHR32063:SF32">
    <property type="entry name" value="AMINOGLYCOSIDE EFFLUX PUMP-RELATED"/>
    <property type="match status" value="1"/>
</dbReference>
<dbReference type="Pfam" id="PF00873">
    <property type="entry name" value="ACR_tran"/>
    <property type="match status" value="1"/>
</dbReference>
<dbReference type="PRINTS" id="PR00702">
    <property type="entry name" value="ACRIFLAVINRP"/>
</dbReference>
<dbReference type="SUPFAM" id="SSF82693">
    <property type="entry name" value="Multidrug efflux transporter AcrB pore domain, PN1, PN2, PC1 and PC2 subdomains"/>
    <property type="match status" value="3"/>
</dbReference>
<dbReference type="SUPFAM" id="SSF82714">
    <property type="entry name" value="Multidrug efflux transporter AcrB TolC docking domain, DN and DC subdomains"/>
    <property type="match status" value="2"/>
</dbReference>
<dbReference type="SUPFAM" id="SSF82866">
    <property type="entry name" value="Multidrug efflux transporter AcrB transmembrane domain"/>
    <property type="match status" value="2"/>
</dbReference>
<protein>
    <recommendedName>
        <fullName>Probable aminoglycoside efflux pump</fullName>
    </recommendedName>
    <alternativeName>
        <fullName>Acriflavine resistance protein D</fullName>
    </alternativeName>
</protein>
<keyword id="KW-0002">3D-structure</keyword>
<keyword id="KW-0997">Cell inner membrane</keyword>
<keyword id="KW-1003">Cell membrane</keyword>
<keyword id="KW-0472">Membrane</keyword>
<keyword id="KW-1185">Reference proteome</keyword>
<keyword id="KW-0812">Transmembrane</keyword>
<keyword id="KW-1133">Transmembrane helix</keyword>
<keyword id="KW-0813">Transport</keyword>
<evidence type="ECO:0000250" key="1"/>
<evidence type="ECO:0000269" key="2">
    <source>
    </source>
</evidence>
<evidence type="ECO:0000269" key="3">
    <source>
    </source>
</evidence>
<evidence type="ECO:0000305" key="4"/>
<evidence type="ECO:0007829" key="5">
    <source>
        <dbReference type="PDB" id="8F4N"/>
    </source>
</evidence>
<evidence type="ECO:0007829" key="6">
    <source>
        <dbReference type="PDB" id="8F56"/>
    </source>
</evidence>